<feature type="signal peptide" evidence="4">
    <location>
        <begin position="1"/>
        <end position="23"/>
    </location>
</feature>
<feature type="chain" id="PRO_0000413658" description="Snaclec jerdonuxin subunit alpha">
    <location>
        <begin position="24"/>
        <end position="158"/>
    </location>
</feature>
<feature type="domain" description="C-type lectin" evidence="3">
    <location>
        <begin position="34"/>
        <end position="153"/>
    </location>
</feature>
<feature type="disulfide bond" evidence="2 3">
    <location>
        <begin position="27"/>
        <end position="38"/>
    </location>
</feature>
<feature type="disulfide bond" evidence="2 3">
    <location>
        <begin position="55"/>
        <end position="152"/>
    </location>
</feature>
<feature type="disulfide bond" description="Interchain (with C-100 in subunit beta of heterodimeric partner)" evidence="2 3">
    <location>
        <position position="104"/>
    </location>
</feature>
<feature type="disulfide bond" evidence="2 3">
    <location>
        <begin position="127"/>
        <end position="144"/>
    </location>
</feature>
<feature type="disulfide bond" description="Interchain (with C-26 in subunit beta of tetrameric partner)" evidence="2 3">
    <location>
        <position position="158"/>
    </location>
</feature>
<feature type="sequence conflict" description="In Ref. 1; AA sequence." evidence="5" ref="1">
    <original>E</original>
    <variation>K</variation>
    <location>
        <position position="44"/>
    </location>
</feature>
<protein>
    <recommendedName>
        <fullName>Snaclec jerdonuxin subunit alpha</fullName>
    </recommendedName>
</protein>
<name>SLJA_PROJR</name>
<dbReference type="EMBL" id="GU136389">
    <property type="protein sequence ID" value="ADK56182.1"/>
    <property type="molecule type" value="mRNA"/>
</dbReference>
<dbReference type="SMR" id="E2DQZ6"/>
<dbReference type="GO" id="GO:0005576">
    <property type="term" value="C:extracellular region"/>
    <property type="evidence" value="ECO:0007669"/>
    <property type="project" value="UniProtKB-SubCell"/>
</dbReference>
<dbReference type="GO" id="GO:0030246">
    <property type="term" value="F:carbohydrate binding"/>
    <property type="evidence" value="ECO:0007669"/>
    <property type="project" value="UniProtKB-KW"/>
</dbReference>
<dbReference type="GO" id="GO:0090729">
    <property type="term" value="F:toxin activity"/>
    <property type="evidence" value="ECO:0007669"/>
    <property type="project" value="UniProtKB-KW"/>
</dbReference>
<dbReference type="FunFam" id="3.10.100.10:FF:000087">
    <property type="entry name" value="Snaclec rhodocetin subunit delta"/>
    <property type="match status" value="1"/>
</dbReference>
<dbReference type="Gene3D" id="3.10.100.10">
    <property type="entry name" value="Mannose-Binding Protein A, subunit A"/>
    <property type="match status" value="1"/>
</dbReference>
<dbReference type="InterPro" id="IPR001304">
    <property type="entry name" value="C-type_lectin-like"/>
</dbReference>
<dbReference type="InterPro" id="IPR016186">
    <property type="entry name" value="C-type_lectin-like/link_sf"/>
</dbReference>
<dbReference type="InterPro" id="IPR050111">
    <property type="entry name" value="C-type_lectin/snaclec_domain"/>
</dbReference>
<dbReference type="InterPro" id="IPR018378">
    <property type="entry name" value="C-type_lectin_CS"/>
</dbReference>
<dbReference type="InterPro" id="IPR016187">
    <property type="entry name" value="CTDL_fold"/>
</dbReference>
<dbReference type="PANTHER" id="PTHR22803">
    <property type="entry name" value="MANNOSE, PHOSPHOLIPASE, LECTIN RECEPTOR RELATED"/>
    <property type="match status" value="1"/>
</dbReference>
<dbReference type="Pfam" id="PF00059">
    <property type="entry name" value="Lectin_C"/>
    <property type="match status" value="1"/>
</dbReference>
<dbReference type="PRINTS" id="PR01504">
    <property type="entry name" value="PNCREATITSAP"/>
</dbReference>
<dbReference type="SMART" id="SM00034">
    <property type="entry name" value="CLECT"/>
    <property type="match status" value="1"/>
</dbReference>
<dbReference type="SUPFAM" id="SSF56436">
    <property type="entry name" value="C-type lectin-like"/>
    <property type="match status" value="1"/>
</dbReference>
<dbReference type="PROSITE" id="PS00615">
    <property type="entry name" value="C_TYPE_LECTIN_1"/>
    <property type="match status" value="1"/>
</dbReference>
<dbReference type="PROSITE" id="PS50041">
    <property type="entry name" value="C_TYPE_LECTIN_2"/>
    <property type="match status" value="1"/>
</dbReference>
<sequence>MGRFTFVSFGLLVVFLSLSGTGADFDCIPGWSAYDRYCYQAFSEPKNWEDAESFCEEGVKTSHLVSIESSGEGDFVAQLVSEKIKTSFQYVWIGLRIQNKEQQCRSEWTDASSVNYENLIKQFSKKCYALKKGTELRTWFNVYCGTENPFVCKYTPEC</sequence>
<comment type="function">
    <text evidence="4">Snaclec that strongly induces platelet aggregation, in a dose-dependent manner.</text>
</comment>
<comment type="subunit">
    <text evidence="1">Tetramer of 4 heterodimers of alpha and beta subunits; disulfide-linked.</text>
</comment>
<comment type="subcellular location">
    <subcellularLocation>
        <location evidence="4">Secreted</location>
    </subcellularLocation>
</comment>
<comment type="tissue specificity">
    <text evidence="4">Expressed by the venom gland.</text>
</comment>
<comment type="similarity">
    <text evidence="5">Belongs to the snaclec family.</text>
</comment>
<evidence type="ECO:0000250" key="1"/>
<evidence type="ECO:0000250" key="2">
    <source>
        <dbReference type="UniProtKB" id="Q6TPH0"/>
    </source>
</evidence>
<evidence type="ECO:0000255" key="3">
    <source>
        <dbReference type="PROSITE-ProRule" id="PRU00040"/>
    </source>
</evidence>
<evidence type="ECO:0000269" key="4">
    <source>
    </source>
</evidence>
<evidence type="ECO:0000305" key="5"/>
<evidence type="ECO:0000312" key="6">
    <source>
        <dbReference type="EMBL" id="ADK56182.1"/>
    </source>
</evidence>
<organism>
    <name type="scientific">Protobothrops jerdonii</name>
    <name type="common">Jerdon's pitviper</name>
    <name type="synonym">Trimeresurus jerdonii</name>
    <dbReference type="NCBI Taxonomy" id="242841"/>
    <lineage>
        <taxon>Eukaryota</taxon>
        <taxon>Metazoa</taxon>
        <taxon>Chordata</taxon>
        <taxon>Craniata</taxon>
        <taxon>Vertebrata</taxon>
        <taxon>Euteleostomi</taxon>
        <taxon>Lepidosauria</taxon>
        <taxon>Squamata</taxon>
        <taxon>Bifurcata</taxon>
        <taxon>Unidentata</taxon>
        <taxon>Episquamata</taxon>
        <taxon>Toxicofera</taxon>
        <taxon>Serpentes</taxon>
        <taxon>Colubroidea</taxon>
        <taxon>Viperidae</taxon>
        <taxon>Crotalinae</taxon>
        <taxon>Protobothrops</taxon>
    </lineage>
</organism>
<reference evidence="5 6" key="1">
    <citation type="journal article" date="2011" name="Toxicon">
        <title>Jerdonuxin, a novel snaclec (snake C-type lectin) with platelet aggregation activity from Trimeresurus jerdonii venom.</title>
        <authorList>
            <person name="Chen Z.M."/>
            <person name="Wu J.B."/>
            <person name="Zhang Y."/>
            <person name="Yu G.Y."/>
            <person name="Lee W.H."/>
            <person name="Lu Q.M."/>
            <person name="Zhang Y."/>
        </authorList>
    </citation>
    <scope>NUCLEOTIDE SEQUENCE [MRNA]</scope>
    <scope>PROTEIN SEQUENCE OF 24-45</scope>
    <scope>FUNCTION</scope>
    <source>
        <tissue evidence="4">Venom</tissue>
    </source>
</reference>
<keyword id="KW-0903">Direct protein sequencing</keyword>
<keyword id="KW-1015">Disulfide bond</keyword>
<keyword id="KW-1199">Hemostasis impairing toxin</keyword>
<keyword id="KW-0430">Lectin</keyword>
<keyword id="KW-1202">Platelet aggregation activating toxin</keyword>
<keyword id="KW-0964">Secreted</keyword>
<keyword id="KW-0732">Signal</keyword>
<keyword id="KW-0800">Toxin</keyword>
<accession>E2DQZ6</accession>
<proteinExistence type="evidence at protein level"/>